<dbReference type="EMBL" id="AE016830">
    <property type="protein sequence ID" value="AAO81472.1"/>
    <property type="molecule type" value="Genomic_DNA"/>
</dbReference>
<dbReference type="RefSeq" id="NP_815402.1">
    <property type="nucleotide sequence ID" value="NC_004668.1"/>
</dbReference>
<dbReference type="RefSeq" id="WP_002357434.1">
    <property type="nucleotide sequence ID" value="NZ_KE136528.1"/>
</dbReference>
<dbReference type="PDB" id="6WUB">
    <property type="method" value="EM"/>
    <property type="resolution" value="3.20 A"/>
    <property type="chains" value="p=2-90"/>
</dbReference>
<dbReference type="PDB" id="7P7Q">
    <property type="method" value="EM"/>
    <property type="resolution" value="2.40 A"/>
    <property type="chains" value="q=1-91"/>
</dbReference>
<dbReference type="PDB" id="7P7R">
    <property type="method" value="EM"/>
    <property type="resolution" value="2.90 A"/>
    <property type="chains" value="q=1-91"/>
</dbReference>
<dbReference type="PDBsum" id="6WUB"/>
<dbReference type="PDBsum" id="7P7Q"/>
<dbReference type="PDBsum" id="7P7R"/>
<dbReference type="EMDB" id="EMD-13241"/>
<dbReference type="EMDB" id="EMD-13242"/>
<dbReference type="SMR" id="Q834F9"/>
<dbReference type="STRING" id="226185.EF_1694"/>
<dbReference type="EnsemblBacteria" id="AAO81472">
    <property type="protein sequence ID" value="AAO81472"/>
    <property type="gene ID" value="EF_1694"/>
</dbReference>
<dbReference type="GeneID" id="60893992"/>
<dbReference type="KEGG" id="efa:EF1694"/>
<dbReference type="PATRIC" id="fig|226185.45.peg.1816"/>
<dbReference type="eggNOG" id="COG0228">
    <property type="taxonomic scope" value="Bacteria"/>
</dbReference>
<dbReference type="HOGENOM" id="CLU_100590_5_0_9"/>
<dbReference type="Proteomes" id="UP000001415">
    <property type="component" value="Chromosome"/>
</dbReference>
<dbReference type="GO" id="GO:0005737">
    <property type="term" value="C:cytoplasm"/>
    <property type="evidence" value="ECO:0007669"/>
    <property type="project" value="UniProtKB-ARBA"/>
</dbReference>
<dbReference type="GO" id="GO:0015935">
    <property type="term" value="C:small ribosomal subunit"/>
    <property type="evidence" value="ECO:0007669"/>
    <property type="project" value="TreeGrafter"/>
</dbReference>
<dbReference type="GO" id="GO:0003735">
    <property type="term" value="F:structural constituent of ribosome"/>
    <property type="evidence" value="ECO:0007669"/>
    <property type="project" value="InterPro"/>
</dbReference>
<dbReference type="GO" id="GO:0006412">
    <property type="term" value="P:translation"/>
    <property type="evidence" value="ECO:0007669"/>
    <property type="project" value="UniProtKB-UniRule"/>
</dbReference>
<dbReference type="FunFam" id="3.30.1320.10:FF:000002">
    <property type="entry name" value="30S ribosomal protein S16"/>
    <property type="match status" value="1"/>
</dbReference>
<dbReference type="Gene3D" id="3.30.1320.10">
    <property type="match status" value="1"/>
</dbReference>
<dbReference type="HAMAP" id="MF_00385">
    <property type="entry name" value="Ribosomal_bS16"/>
    <property type="match status" value="1"/>
</dbReference>
<dbReference type="InterPro" id="IPR000307">
    <property type="entry name" value="Ribosomal_bS16"/>
</dbReference>
<dbReference type="InterPro" id="IPR023803">
    <property type="entry name" value="Ribosomal_bS16_dom_sf"/>
</dbReference>
<dbReference type="NCBIfam" id="TIGR00002">
    <property type="entry name" value="S16"/>
    <property type="match status" value="1"/>
</dbReference>
<dbReference type="PANTHER" id="PTHR12919">
    <property type="entry name" value="30S RIBOSOMAL PROTEIN S16"/>
    <property type="match status" value="1"/>
</dbReference>
<dbReference type="PANTHER" id="PTHR12919:SF20">
    <property type="entry name" value="SMALL RIBOSOMAL SUBUNIT PROTEIN BS16M"/>
    <property type="match status" value="1"/>
</dbReference>
<dbReference type="Pfam" id="PF00886">
    <property type="entry name" value="Ribosomal_S16"/>
    <property type="match status" value="1"/>
</dbReference>
<dbReference type="SUPFAM" id="SSF54565">
    <property type="entry name" value="Ribosomal protein S16"/>
    <property type="match status" value="1"/>
</dbReference>
<sequence length="91" mass="10334">MAVKIRLKRMGSKKSPFYRIVVADSRSPRDGRFIETVGTYNPLKDPAEVVLKEDLVLDWLSKGAQPSDTVRNILSKEGVMKKHHEAKNVKK</sequence>
<comment type="similarity">
    <text evidence="1">Belongs to the bacterial ribosomal protein bS16 family.</text>
</comment>
<gene>
    <name evidence="1" type="primary">rpsP</name>
    <name type="ordered locus">EF_1694</name>
</gene>
<organism>
    <name type="scientific">Enterococcus faecalis (strain ATCC 700802 / V583)</name>
    <dbReference type="NCBI Taxonomy" id="226185"/>
    <lineage>
        <taxon>Bacteria</taxon>
        <taxon>Bacillati</taxon>
        <taxon>Bacillota</taxon>
        <taxon>Bacilli</taxon>
        <taxon>Lactobacillales</taxon>
        <taxon>Enterococcaceae</taxon>
        <taxon>Enterococcus</taxon>
    </lineage>
</organism>
<proteinExistence type="evidence at protein level"/>
<accession>Q834F9</accession>
<name>RS16_ENTFA</name>
<feature type="chain" id="PRO_0000167187" description="Small ribosomal subunit protein bS16">
    <location>
        <begin position="1"/>
        <end position="91"/>
    </location>
</feature>
<feature type="strand" evidence="3">
    <location>
        <begin position="3"/>
        <end position="9"/>
    </location>
</feature>
<feature type="strand" evidence="3">
    <location>
        <begin position="12"/>
        <end position="15"/>
    </location>
</feature>
<feature type="strand" evidence="3">
    <location>
        <begin position="18"/>
        <end position="24"/>
    </location>
</feature>
<feature type="strand" evidence="3">
    <location>
        <begin position="34"/>
        <end position="46"/>
    </location>
</feature>
<feature type="strand" evidence="3">
    <location>
        <begin position="48"/>
        <end position="50"/>
    </location>
</feature>
<feature type="strand" evidence="3">
    <location>
        <begin position="53"/>
        <end position="55"/>
    </location>
</feature>
<feature type="helix" evidence="3">
    <location>
        <begin position="56"/>
        <end position="60"/>
    </location>
</feature>
<feature type="turn" evidence="3">
    <location>
        <begin position="61"/>
        <end position="63"/>
    </location>
</feature>
<feature type="helix" evidence="3">
    <location>
        <begin position="68"/>
        <end position="75"/>
    </location>
</feature>
<feature type="turn" evidence="3">
    <location>
        <begin position="76"/>
        <end position="78"/>
    </location>
</feature>
<feature type="helix" evidence="3">
    <location>
        <begin position="79"/>
        <end position="87"/>
    </location>
</feature>
<protein>
    <recommendedName>
        <fullName evidence="1">Small ribosomal subunit protein bS16</fullName>
    </recommendedName>
    <alternativeName>
        <fullName evidence="2">30S ribosomal protein S16</fullName>
    </alternativeName>
</protein>
<evidence type="ECO:0000255" key="1">
    <source>
        <dbReference type="HAMAP-Rule" id="MF_00385"/>
    </source>
</evidence>
<evidence type="ECO:0000305" key="2"/>
<evidence type="ECO:0007829" key="3">
    <source>
        <dbReference type="PDB" id="6WUB"/>
    </source>
</evidence>
<reference key="1">
    <citation type="journal article" date="2003" name="Science">
        <title>Role of mobile DNA in the evolution of vancomycin-resistant Enterococcus faecalis.</title>
        <authorList>
            <person name="Paulsen I.T."/>
            <person name="Banerjei L."/>
            <person name="Myers G.S.A."/>
            <person name="Nelson K.E."/>
            <person name="Seshadri R."/>
            <person name="Read T.D."/>
            <person name="Fouts D.E."/>
            <person name="Eisen J.A."/>
            <person name="Gill S.R."/>
            <person name="Heidelberg J.F."/>
            <person name="Tettelin H."/>
            <person name="Dodson R.J."/>
            <person name="Umayam L.A."/>
            <person name="Brinkac L.M."/>
            <person name="Beanan M.J."/>
            <person name="Daugherty S.C."/>
            <person name="DeBoy R.T."/>
            <person name="Durkin S.A."/>
            <person name="Kolonay J.F."/>
            <person name="Madupu R."/>
            <person name="Nelson W.C."/>
            <person name="Vamathevan J.J."/>
            <person name="Tran B."/>
            <person name="Upton J."/>
            <person name="Hansen T."/>
            <person name="Shetty J."/>
            <person name="Khouri H.M."/>
            <person name="Utterback T.R."/>
            <person name="Radune D."/>
            <person name="Ketchum K.A."/>
            <person name="Dougherty B.A."/>
            <person name="Fraser C.M."/>
        </authorList>
    </citation>
    <scope>NUCLEOTIDE SEQUENCE [LARGE SCALE GENOMIC DNA]</scope>
    <source>
        <strain>ATCC 700802 / V583</strain>
    </source>
</reference>
<keyword id="KW-0002">3D-structure</keyword>
<keyword id="KW-1185">Reference proteome</keyword>
<keyword id="KW-0687">Ribonucleoprotein</keyword>
<keyword id="KW-0689">Ribosomal protein</keyword>